<reference key="1">
    <citation type="journal article" date="2000" name="Nature">
        <title>Sequence and analysis of chromosome 1 of the plant Arabidopsis thaliana.</title>
        <authorList>
            <person name="Theologis A."/>
            <person name="Ecker J.R."/>
            <person name="Palm C.J."/>
            <person name="Federspiel N.A."/>
            <person name="Kaul S."/>
            <person name="White O."/>
            <person name="Alonso J."/>
            <person name="Altafi H."/>
            <person name="Araujo R."/>
            <person name="Bowman C.L."/>
            <person name="Brooks S.Y."/>
            <person name="Buehler E."/>
            <person name="Chan A."/>
            <person name="Chao Q."/>
            <person name="Chen H."/>
            <person name="Cheuk R.F."/>
            <person name="Chin C.W."/>
            <person name="Chung M.K."/>
            <person name="Conn L."/>
            <person name="Conway A.B."/>
            <person name="Conway A.R."/>
            <person name="Creasy T.H."/>
            <person name="Dewar K."/>
            <person name="Dunn P."/>
            <person name="Etgu P."/>
            <person name="Feldblyum T.V."/>
            <person name="Feng J.-D."/>
            <person name="Fong B."/>
            <person name="Fujii C.Y."/>
            <person name="Gill J.E."/>
            <person name="Goldsmith A.D."/>
            <person name="Haas B."/>
            <person name="Hansen N.F."/>
            <person name="Hughes B."/>
            <person name="Huizar L."/>
            <person name="Hunter J.L."/>
            <person name="Jenkins J."/>
            <person name="Johnson-Hopson C."/>
            <person name="Khan S."/>
            <person name="Khaykin E."/>
            <person name="Kim C.J."/>
            <person name="Koo H.L."/>
            <person name="Kremenetskaia I."/>
            <person name="Kurtz D.B."/>
            <person name="Kwan A."/>
            <person name="Lam B."/>
            <person name="Langin-Hooper S."/>
            <person name="Lee A."/>
            <person name="Lee J.M."/>
            <person name="Lenz C.A."/>
            <person name="Li J.H."/>
            <person name="Li Y.-P."/>
            <person name="Lin X."/>
            <person name="Liu S.X."/>
            <person name="Liu Z.A."/>
            <person name="Luros J.S."/>
            <person name="Maiti R."/>
            <person name="Marziali A."/>
            <person name="Militscher J."/>
            <person name="Miranda M."/>
            <person name="Nguyen M."/>
            <person name="Nierman W.C."/>
            <person name="Osborne B.I."/>
            <person name="Pai G."/>
            <person name="Peterson J."/>
            <person name="Pham P.K."/>
            <person name="Rizzo M."/>
            <person name="Rooney T."/>
            <person name="Rowley D."/>
            <person name="Sakano H."/>
            <person name="Salzberg S.L."/>
            <person name="Schwartz J.R."/>
            <person name="Shinn P."/>
            <person name="Southwick A.M."/>
            <person name="Sun H."/>
            <person name="Tallon L.J."/>
            <person name="Tambunga G."/>
            <person name="Toriumi M.J."/>
            <person name="Town C.D."/>
            <person name="Utterback T."/>
            <person name="Van Aken S."/>
            <person name="Vaysberg M."/>
            <person name="Vysotskaia V.S."/>
            <person name="Walker M."/>
            <person name="Wu D."/>
            <person name="Yu G."/>
            <person name="Fraser C.M."/>
            <person name="Venter J.C."/>
            <person name="Davis R.W."/>
        </authorList>
    </citation>
    <scope>NUCLEOTIDE SEQUENCE [LARGE SCALE GENOMIC DNA]</scope>
    <source>
        <strain>cv. Columbia</strain>
    </source>
</reference>
<reference key="2">
    <citation type="journal article" date="2017" name="Plant J.">
        <title>Araport11: a complete reannotation of the Arabidopsis thaliana reference genome.</title>
        <authorList>
            <person name="Cheng C.Y."/>
            <person name="Krishnakumar V."/>
            <person name="Chan A.P."/>
            <person name="Thibaud-Nissen F."/>
            <person name="Schobel S."/>
            <person name="Town C.D."/>
        </authorList>
    </citation>
    <scope>GENOME REANNOTATION</scope>
    <source>
        <strain>cv. Columbia</strain>
    </source>
</reference>
<reference key="3">
    <citation type="journal article" date="2002" name="Science">
        <title>Functional annotation of a full-length Arabidopsis cDNA collection.</title>
        <authorList>
            <person name="Seki M."/>
            <person name="Narusaka M."/>
            <person name="Kamiya A."/>
            <person name="Ishida J."/>
            <person name="Satou M."/>
            <person name="Sakurai T."/>
            <person name="Nakajima M."/>
            <person name="Enju A."/>
            <person name="Akiyama K."/>
            <person name="Oono Y."/>
            <person name="Muramatsu M."/>
            <person name="Hayashizaki Y."/>
            <person name="Kawai J."/>
            <person name="Carninci P."/>
            <person name="Itoh M."/>
            <person name="Ishii Y."/>
            <person name="Arakawa T."/>
            <person name="Shibata K."/>
            <person name="Shinagawa A."/>
            <person name="Shinozaki K."/>
        </authorList>
    </citation>
    <scope>NUCLEOTIDE SEQUENCE [LARGE SCALE MRNA]</scope>
    <source>
        <strain>cv. Columbia</strain>
    </source>
</reference>
<reference key="4">
    <citation type="journal article" date="2003" name="Science">
        <title>Empirical analysis of transcriptional activity in the Arabidopsis genome.</title>
        <authorList>
            <person name="Yamada K."/>
            <person name="Lim J."/>
            <person name="Dale J.M."/>
            <person name="Chen H."/>
            <person name="Shinn P."/>
            <person name="Palm C.J."/>
            <person name="Southwick A.M."/>
            <person name="Wu H.C."/>
            <person name="Kim C.J."/>
            <person name="Nguyen M."/>
            <person name="Pham P.K."/>
            <person name="Cheuk R.F."/>
            <person name="Karlin-Newmann G."/>
            <person name="Liu S.X."/>
            <person name="Lam B."/>
            <person name="Sakano H."/>
            <person name="Wu T."/>
            <person name="Yu G."/>
            <person name="Miranda M."/>
            <person name="Quach H.L."/>
            <person name="Tripp M."/>
            <person name="Chang C.H."/>
            <person name="Lee J.M."/>
            <person name="Toriumi M.J."/>
            <person name="Chan M.M."/>
            <person name="Tang C.C."/>
            <person name="Onodera C.S."/>
            <person name="Deng J.M."/>
            <person name="Akiyama K."/>
            <person name="Ansari Y."/>
            <person name="Arakawa T."/>
            <person name="Banh J."/>
            <person name="Banno F."/>
            <person name="Bowser L."/>
            <person name="Brooks S.Y."/>
            <person name="Carninci P."/>
            <person name="Chao Q."/>
            <person name="Choy N."/>
            <person name="Enju A."/>
            <person name="Goldsmith A.D."/>
            <person name="Gurjal M."/>
            <person name="Hansen N.F."/>
            <person name="Hayashizaki Y."/>
            <person name="Johnson-Hopson C."/>
            <person name="Hsuan V.W."/>
            <person name="Iida K."/>
            <person name="Karnes M."/>
            <person name="Khan S."/>
            <person name="Koesema E."/>
            <person name="Ishida J."/>
            <person name="Jiang P.X."/>
            <person name="Jones T."/>
            <person name="Kawai J."/>
            <person name="Kamiya A."/>
            <person name="Meyers C."/>
            <person name="Nakajima M."/>
            <person name="Narusaka M."/>
            <person name="Seki M."/>
            <person name="Sakurai T."/>
            <person name="Satou M."/>
            <person name="Tamse R."/>
            <person name="Vaysberg M."/>
            <person name="Wallender E.K."/>
            <person name="Wong C."/>
            <person name="Yamamura Y."/>
            <person name="Yuan S."/>
            <person name="Shinozaki K."/>
            <person name="Davis R.W."/>
            <person name="Theologis A."/>
            <person name="Ecker J.R."/>
        </authorList>
    </citation>
    <scope>NUCLEOTIDE SEQUENCE [LARGE SCALE MRNA]</scope>
    <source>
        <strain>cv. Columbia</strain>
    </source>
</reference>
<reference key="5">
    <citation type="submission" date="2004-09" db="EMBL/GenBank/DDBJ databases">
        <title>Large-scale analysis of RIKEN Arabidopsis full-length (RAFL) cDNAs.</title>
        <authorList>
            <person name="Totoki Y."/>
            <person name="Seki M."/>
            <person name="Ishida J."/>
            <person name="Nakajima M."/>
            <person name="Enju A."/>
            <person name="Kamiya A."/>
            <person name="Narusaka M."/>
            <person name="Shin-i T."/>
            <person name="Nakagawa M."/>
            <person name="Sakamoto N."/>
            <person name="Oishi K."/>
            <person name="Kohara Y."/>
            <person name="Kobayashi M."/>
            <person name="Toyoda A."/>
            <person name="Sakaki Y."/>
            <person name="Sakurai T."/>
            <person name="Iida K."/>
            <person name="Akiyama K."/>
            <person name="Satou M."/>
            <person name="Toyoda T."/>
            <person name="Konagaya A."/>
            <person name="Carninci P."/>
            <person name="Kawai J."/>
            <person name="Hayashizaki Y."/>
            <person name="Shinozaki K."/>
        </authorList>
    </citation>
    <scope>NUCLEOTIDE SEQUENCE [LARGE SCALE MRNA]</scope>
    <source>
        <strain>cv. Columbia</strain>
    </source>
</reference>
<reference key="6">
    <citation type="submission" date="2002-03" db="EMBL/GenBank/DDBJ databases">
        <title>Full-length cDNA from Arabidopsis thaliana.</title>
        <authorList>
            <person name="Brover V.V."/>
            <person name="Troukhan M.E."/>
            <person name="Alexandrov N.A."/>
            <person name="Lu Y.-P."/>
            <person name="Flavell R.B."/>
            <person name="Feldmann K.A."/>
        </authorList>
    </citation>
    <scope>NUCLEOTIDE SEQUENCE [LARGE SCALE MRNA]</scope>
</reference>
<reference key="7">
    <citation type="journal article" date="2002" name="Plant Mol. Biol.">
        <title>Probing the diversity of the Arabidopsis glutathione S-transferase gene family.</title>
        <authorList>
            <person name="Wagner U."/>
            <person name="Edwards R."/>
            <person name="Dixon D.P."/>
            <person name="Mauch F."/>
        </authorList>
    </citation>
    <scope>GENE FAMILY</scope>
    <scope>NOMENCLATURE</scope>
</reference>
<reference key="8">
    <citation type="journal article" date="2012" name="Mol. Cell. Proteomics">
        <title>Comparative large-scale characterisation of plant vs. mammal proteins reveals similar and idiosyncratic N-alpha acetylation features.</title>
        <authorList>
            <person name="Bienvenut W.V."/>
            <person name="Sumpton D."/>
            <person name="Martinez A."/>
            <person name="Lilla S."/>
            <person name="Espagne C."/>
            <person name="Meinnel T."/>
            <person name="Giglione C."/>
        </authorList>
    </citation>
    <scope>ACETYLATION [LARGE SCALE ANALYSIS] AT ALA-2</scope>
    <scope>CLEAVAGE OF INITIATOR METHIONINE [LARGE SCALE ANALYSIS]</scope>
    <scope>IDENTIFICATION BY MASS SPECTROMETRY [LARGE SCALE ANALYSIS]</scope>
</reference>
<keyword id="KW-0007">Acetylation</keyword>
<keyword id="KW-0963">Cytoplasm</keyword>
<keyword id="KW-0216">Detoxification</keyword>
<keyword id="KW-0597">Phosphoprotein</keyword>
<keyword id="KW-1185">Reference proteome</keyword>
<keyword id="KW-0808">Transferase</keyword>
<gene>
    <name type="primary">GSTU22</name>
    <name type="ordered locus">At1g78340</name>
    <name type="ORF">F3F9.13</name>
</gene>
<dbReference type="EC" id="2.5.1.18"/>
<dbReference type="EMBL" id="AC013430">
    <property type="protein sequence ID" value="AAF71799.1"/>
    <property type="status" value="ALT_SEQ"/>
    <property type="molecule type" value="Genomic_DNA"/>
</dbReference>
<dbReference type="EMBL" id="CP002684">
    <property type="protein sequence ID" value="AEE36096.1"/>
    <property type="molecule type" value="Genomic_DNA"/>
</dbReference>
<dbReference type="EMBL" id="AK117519">
    <property type="protein sequence ID" value="BAC42182.1"/>
    <property type="molecule type" value="mRNA"/>
</dbReference>
<dbReference type="EMBL" id="BT005427">
    <property type="protein sequence ID" value="AAO63847.1"/>
    <property type="molecule type" value="mRNA"/>
</dbReference>
<dbReference type="EMBL" id="AK176247">
    <property type="protein sequence ID" value="BAD44010.1"/>
    <property type="molecule type" value="mRNA"/>
</dbReference>
<dbReference type="EMBL" id="AY086469">
    <property type="protein sequence ID" value="AAM63471.1"/>
    <property type="molecule type" value="mRNA"/>
</dbReference>
<dbReference type="RefSeq" id="NP_177956.1">
    <property type="nucleotide sequence ID" value="NM_106482.2"/>
</dbReference>
<dbReference type="SMR" id="Q8GYM1"/>
<dbReference type="BioGRID" id="29388">
    <property type="interactions" value="3"/>
</dbReference>
<dbReference type="FunCoup" id="Q8GYM1">
    <property type="interactions" value="191"/>
</dbReference>
<dbReference type="IntAct" id="Q8GYM1">
    <property type="interactions" value="2"/>
</dbReference>
<dbReference type="STRING" id="3702.Q8GYM1"/>
<dbReference type="iPTMnet" id="Q8GYM1"/>
<dbReference type="PaxDb" id="3702-AT1G78340.1"/>
<dbReference type="ProteomicsDB" id="247343"/>
<dbReference type="EnsemblPlants" id="AT1G78340.1">
    <property type="protein sequence ID" value="AT1G78340.1"/>
    <property type="gene ID" value="AT1G78340"/>
</dbReference>
<dbReference type="GeneID" id="844169"/>
<dbReference type="Gramene" id="AT1G78340.1">
    <property type="protein sequence ID" value="AT1G78340.1"/>
    <property type="gene ID" value="AT1G78340"/>
</dbReference>
<dbReference type="KEGG" id="ath:AT1G78340"/>
<dbReference type="Araport" id="AT1G78340"/>
<dbReference type="TAIR" id="AT1G78340">
    <property type="gene designation" value="GSTU22"/>
</dbReference>
<dbReference type="eggNOG" id="KOG0406">
    <property type="taxonomic scope" value="Eukaryota"/>
</dbReference>
<dbReference type="HOGENOM" id="CLU_011226_18_2_1"/>
<dbReference type="InParanoid" id="Q8GYM1"/>
<dbReference type="OMA" id="YYSWFEA"/>
<dbReference type="OrthoDB" id="202840at2759"/>
<dbReference type="PhylomeDB" id="Q8GYM1"/>
<dbReference type="BioCyc" id="ARA:AT1G78340-MONOMER"/>
<dbReference type="PRO" id="PR:Q8GYM1"/>
<dbReference type="Proteomes" id="UP000006548">
    <property type="component" value="Chromosome 1"/>
</dbReference>
<dbReference type="ExpressionAtlas" id="Q8GYM1">
    <property type="expression patterns" value="baseline and differential"/>
</dbReference>
<dbReference type="GO" id="GO:0005737">
    <property type="term" value="C:cytoplasm"/>
    <property type="evidence" value="ECO:0000303"/>
    <property type="project" value="TAIR"/>
</dbReference>
<dbReference type="GO" id="GO:0005829">
    <property type="term" value="C:cytosol"/>
    <property type="evidence" value="ECO:0007669"/>
    <property type="project" value="UniProtKB-SubCell"/>
</dbReference>
<dbReference type="GO" id="GO:0004364">
    <property type="term" value="F:glutathione transferase activity"/>
    <property type="evidence" value="ECO:0007669"/>
    <property type="project" value="UniProtKB-EC"/>
</dbReference>
<dbReference type="GO" id="GO:0006749">
    <property type="term" value="P:glutathione metabolic process"/>
    <property type="evidence" value="ECO:0007669"/>
    <property type="project" value="InterPro"/>
</dbReference>
<dbReference type="GO" id="GO:0009407">
    <property type="term" value="P:toxin catabolic process"/>
    <property type="evidence" value="ECO:0000304"/>
    <property type="project" value="TAIR"/>
</dbReference>
<dbReference type="CDD" id="cd03185">
    <property type="entry name" value="GST_C_Tau"/>
    <property type="match status" value="1"/>
</dbReference>
<dbReference type="CDD" id="cd03058">
    <property type="entry name" value="GST_N_Tau"/>
    <property type="match status" value="1"/>
</dbReference>
<dbReference type="FunFam" id="1.20.1050.10:FF:000018">
    <property type="entry name" value="Glutathione S-transferase U20"/>
    <property type="match status" value="1"/>
</dbReference>
<dbReference type="FunFam" id="3.40.30.10:FF:000014">
    <property type="entry name" value="Tau class glutathione S-transferase"/>
    <property type="match status" value="1"/>
</dbReference>
<dbReference type="Gene3D" id="1.20.1050.10">
    <property type="match status" value="1"/>
</dbReference>
<dbReference type="Gene3D" id="3.40.30.10">
    <property type="entry name" value="Glutaredoxin"/>
    <property type="match status" value="1"/>
</dbReference>
<dbReference type="InterPro" id="IPR010987">
    <property type="entry name" value="Glutathione-S-Trfase_C-like"/>
</dbReference>
<dbReference type="InterPro" id="IPR036282">
    <property type="entry name" value="Glutathione-S-Trfase_C_sf"/>
</dbReference>
<dbReference type="InterPro" id="IPR040079">
    <property type="entry name" value="Glutathione_S-Trfase"/>
</dbReference>
<dbReference type="InterPro" id="IPR004045">
    <property type="entry name" value="Glutathione_S-Trfase_N"/>
</dbReference>
<dbReference type="InterPro" id="IPR004046">
    <property type="entry name" value="GST_C"/>
</dbReference>
<dbReference type="InterPro" id="IPR045074">
    <property type="entry name" value="GST_C_Tau"/>
</dbReference>
<dbReference type="InterPro" id="IPR045073">
    <property type="entry name" value="Omega/Tau-like"/>
</dbReference>
<dbReference type="InterPro" id="IPR036249">
    <property type="entry name" value="Thioredoxin-like_sf"/>
</dbReference>
<dbReference type="PANTHER" id="PTHR11260:SF584">
    <property type="entry name" value="GLUTATHIONE S-TRANSFERASE U22"/>
    <property type="match status" value="1"/>
</dbReference>
<dbReference type="PANTHER" id="PTHR11260">
    <property type="entry name" value="GLUTATHIONE S-TRANSFERASE, GST, SUPERFAMILY, GST DOMAIN CONTAINING"/>
    <property type="match status" value="1"/>
</dbReference>
<dbReference type="Pfam" id="PF00043">
    <property type="entry name" value="GST_C"/>
    <property type="match status" value="1"/>
</dbReference>
<dbReference type="Pfam" id="PF02798">
    <property type="entry name" value="GST_N"/>
    <property type="match status" value="1"/>
</dbReference>
<dbReference type="SFLD" id="SFLDS00019">
    <property type="entry name" value="Glutathione_Transferase_(cytos"/>
    <property type="match status" value="1"/>
</dbReference>
<dbReference type="SFLD" id="SFLDG01152">
    <property type="entry name" value="Main.3:_Omega-_and_Tau-like"/>
    <property type="match status" value="1"/>
</dbReference>
<dbReference type="SUPFAM" id="SSF47616">
    <property type="entry name" value="GST C-terminal domain-like"/>
    <property type="match status" value="1"/>
</dbReference>
<dbReference type="SUPFAM" id="SSF52833">
    <property type="entry name" value="Thioredoxin-like"/>
    <property type="match status" value="1"/>
</dbReference>
<dbReference type="PROSITE" id="PS50405">
    <property type="entry name" value="GST_CTER"/>
    <property type="match status" value="1"/>
</dbReference>
<dbReference type="PROSITE" id="PS50404">
    <property type="entry name" value="GST_NTER"/>
    <property type="match status" value="1"/>
</dbReference>
<organism>
    <name type="scientific">Arabidopsis thaliana</name>
    <name type="common">Mouse-ear cress</name>
    <dbReference type="NCBI Taxonomy" id="3702"/>
    <lineage>
        <taxon>Eukaryota</taxon>
        <taxon>Viridiplantae</taxon>
        <taxon>Streptophyta</taxon>
        <taxon>Embryophyta</taxon>
        <taxon>Tracheophyta</taxon>
        <taxon>Spermatophyta</taxon>
        <taxon>Magnoliopsida</taxon>
        <taxon>eudicotyledons</taxon>
        <taxon>Gunneridae</taxon>
        <taxon>Pentapetalae</taxon>
        <taxon>rosids</taxon>
        <taxon>malvids</taxon>
        <taxon>Brassicales</taxon>
        <taxon>Brassicaceae</taxon>
        <taxon>Camelineae</taxon>
        <taxon>Arabidopsis</taxon>
    </lineage>
</organism>
<name>GSTUM_ARATH</name>
<evidence type="ECO:0000250" key="1"/>
<evidence type="ECO:0000250" key="2">
    <source>
        <dbReference type="UniProtKB" id="Q9ZW27"/>
    </source>
</evidence>
<evidence type="ECO:0000305" key="3"/>
<evidence type="ECO:0007744" key="4">
    <source>
    </source>
</evidence>
<accession>Q8GYM1</accession>
<accession>Q8LCP9</accession>
<accession>Q9M9F2</accession>
<sequence>MADEVILLDFWPSPFGVRARIALREKGVEFEYREENLRDKSPLLLQMNPVHKKIPVLIHNGKPVCESMNVVQYIDEVWSDKNPILPSDPYQRAQARFWVDFVDTKLFEPADKIWQTKGEEQETAKKEYIEALKILETELGDKPYFGGDTFGFVDIAMTGYYSWFEASEKLANFSIEPECPTLMASAKRCLQRESVVQSLHDSEKILAFAYKIRKIYCV</sequence>
<proteinExistence type="evidence at protein level"/>
<feature type="initiator methionine" description="Removed" evidence="4">
    <location>
        <position position="1"/>
    </location>
</feature>
<feature type="chain" id="PRO_0000413567" description="Glutathione S-transferase U22">
    <location>
        <begin position="2"/>
        <end position="218"/>
    </location>
</feature>
<feature type="domain" description="GST N-terminal">
    <location>
        <begin position="3"/>
        <end position="82"/>
    </location>
</feature>
<feature type="domain" description="GST C-terminal">
    <location>
        <begin position="88"/>
        <end position="208"/>
    </location>
</feature>
<feature type="binding site" evidence="1">
    <location>
        <begin position="13"/>
        <end position="14"/>
    </location>
    <ligand>
        <name>glutathione</name>
        <dbReference type="ChEBI" id="CHEBI:57925"/>
    </ligand>
</feature>
<feature type="binding site" evidence="1">
    <location>
        <begin position="39"/>
        <end position="40"/>
    </location>
    <ligand>
        <name>glutathione</name>
        <dbReference type="ChEBI" id="CHEBI:57925"/>
    </ligand>
</feature>
<feature type="binding site" evidence="1">
    <location>
        <begin position="53"/>
        <end position="54"/>
    </location>
    <ligand>
        <name>glutathione</name>
        <dbReference type="ChEBI" id="CHEBI:57925"/>
    </ligand>
</feature>
<feature type="binding site" evidence="1">
    <location>
        <begin position="66"/>
        <end position="67"/>
    </location>
    <ligand>
        <name>glutathione</name>
        <dbReference type="ChEBI" id="CHEBI:57925"/>
    </ligand>
</feature>
<feature type="modified residue" description="N-acetylalanine" evidence="4">
    <location>
        <position position="2"/>
    </location>
</feature>
<feature type="modified residue" description="Phosphothreonine" evidence="2">
    <location>
        <position position="149"/>
    </location>
</feature>
<protein>
    <recommendedName>
        <fullName>Glutathione S-transferase U22</fullName>
        <shortName>AtGSTU22</shortName>
        <ecNumber>2.5.1.18</ecNumber>
    </recommendedName>
    <alternativeName>
        <fullName>GST class-tau member 22</fullName>
    </alternativeName>
</protein>
<comment type="function">
    <text evidence="1">May be involved in the conjugation of reduced glutathione to a wide number of exogenous and endogenous hydrophobic electrophiles and have a detoxification role against certain herbicides.</text>
</comment>
<comment type="catalytic activity">
    <reaction>
        <text>RX + glutathione = an S-substituted glutathione + a halide anion + H(+)</text>
        <dbReference type="Rhea" id="RHEA:16437"/>
        <dbReference type="ChEBI" id="CHEBI:15378"/>
        <dbReference type="ChEBI" id="CHEBI:16042"/>
        <dbReference type="ChEBI" id="CHEBI:17792"/>
        <dbReference type="ChEBI" id="CHEBI:57925"/>
        <dbReference type="ChEBI" id="CHEBI:90779"/>
        <dbReference type="EC" id="2.5.1.18"/>
    </reaction>
</comment>
<comment type="subcellular location">
    <subcellularLocation>
        <location evidence="3">Cytoplasm</location>
        <location evidence="3">Cytosol</location>
    </subcellularLocation>
</comment>
<comment type="similarity">
    <text evidence="3">Belongs to the GST superfamily. Tau family.</text>
</comment>
<comment type="sequence caution" evidence="3">
    <conflict type="erroneous gene model prediction">
        <sequence resource="EMBL-CDS" id="AAF71799"/>
    </conflict>
</comment>